<reference key="1">
    <citation type="submission" date="2006-12" db="EMBL/GenBank/DDBJ databases">
        <title>Complete sequence of chromosome 1 of Paracoccus denitrificans PD1222.</title>
        <authorList>
            <person name="Copeland A."/>
            <person name="Lucas S."/>
            <person name="Lapidus A."/>
            <person name="Barry K."/>
            <person name="Detter J.C."/>
            <person name="Glavina del Rio T."/>
            <person name="Hammon N."/>
            <person name="Israni S."/>
            <person name="Dalin E."/>
            <person name="Tice H."/>
            <person name="Pitluck S."/>
            <person name="Munk A.C."/>
            <person name="Brettin T."/>
            <person name="Bruce D."/>
            <person name="Han C."/>
            <person name="Tapia R."/>
            <person name="Gilna P."/>
            <person name="Schmutz J."/>
            <person name="Larimer F."/>
            <person name="Land M."/>
            <person name="Hauser L."/>
            <person name="Kyrpides N."/>
            <person name="Lykidis A."/>
            <person name="Spiro S."/>
            <person name="Richardson D.J."/>
            <person name="Moir J.W.B."/>
            <person name="Ferguson S.J."/>
            <person name="van Spanning R.J.M."/>
            <person name="Richardson P."/>
        </authorList>
    </citation>
    <scope>NUCLEOTIDE SEQUENCE [LARGE SCALE GENOMIC DNA]</scope>
    <source>
        <strain>Pd 1222</strain>
    </source>
</reference>
<sequence length="211" mass="23231">MTQAHLTVVDHPLVQHKLTLMRDKTTSTAGFRRLLREISLLLAYEVTRELEMTTIRIDTPLCEMEAPTLEGKKLALISILRAGNGLMDGILELIPAARVGFIGLYRDPETLQPVQYYSKVPKELDARMTIVVDPMLATGNSSVAAIDLLKAAGARNLRFLCLLASPEGVERMREAHPDVPIVTAALDERLDEHGYIVPGLGDAGDRMFGTK</sequence>
<gene>
    <name evidence="1" type="primary">upp</name>
    <name type="ordered locus">Pden_2219</name>
</gene>
<keyword id="KW-0021">Allosteric enzyme</keyword>
<keyword id="KW-0328">Glycosyltransferase</keyword>
<keyword id="KW-0342">GTP-binding</keyword>
<keyword id="KW-0460">Magnesium</keyword>
<keyword id="KW-0547">Nucleotide-binding</keyword>
<keyword id="KW-1185">Reference proteome</keyword>
<keyword id="KW-0808">Transferase</keyword>
<proteinExistence type="inferred from homology"/>
<feature type="chain" id="PRO_1000053753" description="Uracil phosphoribosyltransferase">
    <location>
        <begin position="1"/>
        <end position="211"/>
    </location>
</feature>
<feature type="binding site" evidence="1">
    <location>
        <position position="81"/>
    </location>
    <ligand>
        <name>5-phospho-alpha-D-ribose 1-diphosphate</name>
        <dbReference type="ChEBI" id="CHEBI:58017"/>
    </ligand>
</feature>
<feature type="binding site" evidence="1">
    <location>
        <position position="106"/>
    </location>
    <ligand>
        <name>5-phospho-alpha-D-ribose 1-diphosphate</name>
        <dbReference type="ChEBI" id="CHEBI:58017"/>
    </ligand>
</feature>
<feature type="binding site" evidence="1">
    <location>
        <begin position="133"/>
        <end position="141"/>
    </location>
    <ligand>
        <name>5-phospho-alpha-D-ribose 1-diphosphate</name>
        <dbReference type="ChEBI" id="CHEBI:58017"/>
    </ligand>
</feature>
<feature type="binding site" evidence="1">
    <location>
        <position position="196"/>
    </location>
    <ligand>
        <name>uracil</name>
        <dbReference type="ChEBI" id="CHEBI:17568"/>
    </ligand>
</feature>
<feature type="binding site" evidence="1">
    <location>
        <begin position="201"/>
        <end position="203"/>
    </location>
    <ligand>
        <name>uracil</name>
        <dbReference type="ChEBI" id="CHEBI:17568"/>
    </ligand>
</feature>
<feature type="binding site" evidence="1">
    <location>
        <position position="202"/>
    </location>
    <ligand>
        <name>5-phospho-alpha-D-ribose 1-diphosphate</name>
        <dbReference type="ChEBI" id="CHEBI:58017"/>
    </ligand>
</feature>
<name>UPP_PARDP</name>
<organism>
    <name type="scientific">Paracoccus denitrificans (strain Pd 1222)</name>
    <dbReference type="NCBI Taxonomy" id="318586"/>
    <lineage>
        <taxon>Bacteria</taxon>
        <taxon>Pseudomonadati</taxon>
        <taxon>Pseudomonadota</taxon>
        <taxon>Alphaproteobacteria</taxon>
        <taxon>Rhodobacterales</taxon>
        <taxon>Paracoccaceae</taxon>
        <taxon>Paracoccus</taxon>
    </lineage>
</organism>
<evidence type="ECO:0000255" key="1">
    <source>
        <dbReference type="HAMAP-Rule" id="MF_01218"/>
    </source>
</evidence>
<comment type="function">
    <text evidence="1">Catalyzes the conversion of uracil and 5-phospho-alpha-D-ribose 1-diphosphate (PRPP) to UMP and diphosphate.</text>
</comment>
<comment type="catalytic activity">
    <reaction evidence="1">
        <text>UMP + diphosphate = 5-phospho-alpha-D-ribose 1-diphosphate + uracil</text>
        <dbReference type="Rhea" id="RHEA:13017"/>
        <dbReference type="ChEBI" id="CHEBI:17568"/>
        <dbReference type="ChEBI" id="CHEBI:33019"/>
        <dbReference type="ChEBI" id="CHEBI:57865"/>
        <dbReference type="ChEBI" id="CHEBI:58017"/>
        <dbReference type="EC" id="2.4.2.9"/>
    </reaction>
</comment>
<comment type="cofactor">
    <cofactor evidence="1">
        <name>Mg(2+)</name>
        <dbReference type="ChEBI" id="CHEBI:18420"/>
    </cofactor>
    <text evidence="1">Binds 1 Mg(2+) ion per subunit. The magnesium is bound as Mg-PRPP.</text>
</comment>
<comment type="activity regulation">
    <text evidence="1">Allosterically activated by GTP.</text>
</comment>
<comment type="pathway">
    <text evidence="1">Pyrimidine metabolism; UMP biosynthesis via salvage pathway; UMP from uracil: step 1/1.</text>
</comment>
<comment type="similarity">
    <text evidence="1">Belongs to the UPRTase family.</text>
</comment>
<dbReference type="EC" id="2.4.2.9" evidence="1"/>
<dbReference type="EMBL" id="CP000489">
    <property type="protein sequence ID" value="ABL70311.1"/>
    <property type="molecule type" value="Genomic_DNA"/>
</dbReference>
<dbReference type="RefSeq" id="WP_011748506.1">
    <property type="nucleotide sequence ID" value="NC_008686.1"/>
</dbReference>
<dbReference type="SMR" id="A1B467"/>
<dbReference type="STRING" id="318586.Pden_2219"/>
<dbReference type="EnsemblBacteria" id="ABL70311">
    <property type="protein sequence ID" value="ABL70311"/>
    <property type="gene ID" value="Pden_2219"/>
</dbReference>
<dbReference type="GeneID" id="93450617"/>
<dbReference type="KEGG" id="pde:Pden_2219"/>
<dbReference type="eggNOG" id="COG0035">
    <property type="taxonomic scope" value="Bacteria"/>
</dbReference>
<dbReference type="HOGENOM" id="CLU_067096_2_2_5"/>
<dbReference type="OrthoDB" id="9781675at2"/>
<dbReference type="UniPathway" id="UPA00574">
    <property type="reaction ID" value="UER00636"/>
</dbReference>
<dbReference type="Proteomes" id="UP000000361">
    <property type="component" value="Chromosome 1"/>
</dbReference>
<dbReference type="GO" id="GO:0005525">
    <property type="term" value="F:GTP binding"/>
    <property type="evidence" value="ECO:0007669"/>
    <property type="project" value="UniProtKB-KW"/>
</dbReference>
<dbReference type="GO" id="GO:0000287">
    <property type="term" value="F:magnesium ion binding"/>
    <property type="evidence" value="ECO:0007669"/>
    <property type="project" value="UniProtKB-UniRule"/>
</dbReference>
<dbReference type="GO" id="GO:0004845">
    <property type="term" value="F:uracil phosphoribosyltransferase activity"/>
    <property type="evidence" value="ECO:0007669"/>
    <property type="project" value="UniProtKB-UniRule"/>
</dbReference>
<dbReference type="GO" id="GO:0044206">
    <property type="term" value="P:UMP salvage"/>
    <property type="evidence" value="ECO:0007669"/>
    <property type="project" value="UniProtKB-UniRule"/>
</dbReference>
<dbReference type="GO" id="GO:0006223">
    <property type="term" value="P:uracil salvage"/>
    <property type="evidence" value="ECO:0007669"/>
    <property type="project" value="InterPro"/>
</dbReference>
<dbReference type="CDD" id="cd06223">
    <property type="entry name" value="PRTases_typeI"/>
    <property type="match status" value="1"/>
</dbReference>
<dbReference type="FunFam" id="3.40.50.2020:FF:000003">
    <property type="entry name" value="Uracil phosphoribosyltransferase"/>
    <property type="match status" value="1"/>
</dbReference>
<dbReference type="Gene3D" id="3.40.50.2020">
    <property type="match status" value="1"/>
</dbReference>
<dbReference type="HAMAP" id="MF_01218_B">
    <property type="entry name" value="Upp_B"/>
    <property type="match status" value="1"/>
</dbReference>
<dbReference type="InterPro" id="IPR000836">
    <property type="entry name" value="PRibTrfase_dom"/>
</dbReference>
<dbReference type="InterPro" id="IPR029057">
    <property type="entry name" value="PRTase-like"/>
</dbReference>
<dbReference type="InterPro" id="IPR034332">
    <property type="entry name" value="Upp_B"/>
</dbReference>
<dbReference type="InterPro" id="IPR050054">
    <property type="entry name" value="UPRTase/APRTase"/>
</dbReference>
<dbReference type="InterPro" id="IPR005765">
    <property type="entry name" value="Ura_phspho_trans"/>
</dbReference>
<dbReference type="NCBIfam" id="NF001097">
    <property type="entry name" value="PRK00129.1"/>
    <property type="match status" value="1"/>
</dbReference>
<dbReference type="NCBIfam" id="TIGR01091">
    <property type="entry name" value="upp"/>
    <property type="match status" value="1"/>
</dbReference>
<dbReference type="PANTHER" id="PTHR32315">
    <property type="entry name" value="ADENINE PHOSPHORIBOSYLTRANSFERASE"/>
    <property type="match status" value="1"/>
</dbReference>
<dbReference type="PANTHER" id="PTHR32315:SF4">
    <property type="entry name" value="URACIL PHOSPHORIBOSYLTRANSFERASE, CHLOROPLASTIC"/>
    <property type="match status" value="1"/>
</dbReference>
<dbReference type="Pfam" id="PF14681">
    <property type="entry name" value="UPRTase"/>
    <property type="match status" value="1"/>
</dbReference>
<dbReference type="SUPFAM" id="SSF53271">
    <property type="entry name" value="PRTase-like"/>
    <property type="match status" value="1"/>
</dbReference>
<protein>
    <recommendedName>
        <fullName evidence="1">Uracil phosphoribosyltransferase</fullName>
        <ecNumber evidence="1">2.4.2.9</ecNumber>
    </recommendedName>
    <alternativeName>
        <fullName evidence="1">UMP pyrophosphorylase</fullName>
    </alternativeName>
    <alternativeName>
        <fullName evidence="1">UPRTase</fullName>
    </alternativeName>
</protein>
<accession>A1B467</accession>